<sequence length="694" mass="79028">MTHTNEHDHKAEQQQNGRGDTTTETVNPQKMKLVTKLLIDNKFGLMDDLNFSIPLTASSEGVPISAKTSELGTEYLKNQQENSVSPILPISRSTRIKADRVRIYLDYYYNILERCISIDSSQNHHEGVEGVYNPLQVIRNRKLKKKHHELPTREFYTTKHPIIAIKQFSKKPNKKMPWFVDINEKYMDLTWRTSHWEELVDPQGKLWFQSYSPSNESSGSSSSRRHHGHHIHPRRHLQHHSRVRTANSVHSNTQSLTPKRVMTNEEDNNNHNNNNMITKIATTPEAQISRNKKSDLNLSHIHLEVPITNTVTNTSSDQGSLIIEAKGSSYGGDRRGSSNTSGSGGKRNSKHYRSKSAGPPENEKSRMNGLEKIISKTSKGWSRSPKKNTPGLEKQVLLNPTISNGGTSRRSSNNGESISTNSSKSSMGITFGNTETYKTPVDNGKDAIIRQSLLSEVPVHTLRGKTSNRSLRAEGEQALESDKELPNGAGSIYEGAPREKTTSQGSEPVGLVSDSLQVDEQLQRYWHDTRYIMSTVAMMQHRRETHDIVKRREIARRNEIEITQDADTNIRKTADALTQYDNELNKVLKLGNDWTSKLLNDYSIRVETLISSSDRILSDINTTLTLKLKMFQENTERYVTVKVMRAQKMTKTIYRLLEFGIVLVLWTIWFLFSVLRSIRFTIFLVLKIIKALLW</sequence>
<name>MTC4_YEAST</name>
<organism>
    <name type="scientific">Saccharomyces cerevisiae (strain ATCC 204508 / S288c)</name>
    <name type="common">Baker's yeast</name>
    <dbReference type="NCBI Taxonomy" id="559292"/>
    <lineage>
        <taxon>Eukaryota</taxon>
        <taxon>Fungi</taxon>
        <taxon>Dikarya</taxon>
        <taxon>Ascomycota</taxon>
        <taxon>Saccharomycotina</taxon>
        <taxon>Saccharomycetes</taxon>
        <taxon>Saccharomycetales</taxon>
        <taxon>Saccharomycetaceae</taxon>
        <taxon>Saccharomyces</taxon>
    </lineage>
</organism>
<gene>
    <name type="primary">MTC4</name>
    <name type="ordered locus">YBR255W</name>
    <name type="ORF">YBR1723</name>
</gene>
<feature type="chain" id="PRO_0000202525" description="Maintenance of telomere capping protein 4">
    <location>
        <begin position="1"/>
        <end position="694"/>
    </location>
</feature>
<feature type="transmembrane region" description="Helical" evidence="1">
    <location>
        <begin position="655"/>
        <end position="675"/>
    </location>
</feature>
<feature type="region of interest" description="Disordered" evidence="2">
    <location>
        <begin position="1"/>
        <end position="26"/>
    </location>
</feature>
<feature type="region of interest" description="Disordered" evidence="2">
    <location>
        <begin position="211"/>
        <end position="287"/>
    </location>
</feature>
<feature type="region of interest" description="Disordered" evidence="2">
    <location>
        <begin position="325"/>
        <end position="437"/>
    </location>
</feature>
<feature type="region of interest" description="Disordered" evidence="2">
    <location>
        <begin position="465"/>
        <end position="511"/>
    </location>
</feature>
<feature type="compositionally biased region" description="Basic and acidic residues" evidence="2">
    <location>
        <begin position="1"/>
        <end position="12"/>
    </location>
</feature>
<feature type="compositionally biased region" description="Polar residues" evidence="2">
    <location>
        <begin position="13"/>
        <end position="26"/>
    </location>
</feature>
<feature type="compositionally biased region" description="Low complexity" evidence="2">
    <location>
        <begin position="211"/>
        <end position="222"/>
    </location>
</feature>
<feature type="compositionally biased region" description="Basic residues" evidence="2">
    <location>
        <begin position="223"/>
        <end position="243"/>
    </location>
</feature>
<feature type="compositionally biased region" description="Polar residues" evidence="2">
    <location>
        <begin position="244"/>
        <end position="257"/>
    </location>
</feature>
<feature type="compositionally biased region" description="Polar residues" evidence="2">
    <location>
        <begin position="276"/>
        <end position="287"/>
    </location>
</feature>
<feature type="compositionally biased region" description="Low complexity" evidence="2">
    <location>
        <begin position="403"/>
        <end position="417"/>
    </location>
</feature>
<feature type="compositionally biased region" description="Polar residues" evidence="2">
    <location>
        <begin position="418"/>
        <end position="437"/>
    </location>
</feature>
<feature type="compositionally biased region" description="Basic and acidic residues" evidence="2">
    <location>
        <begin position="471"/>
        <end position="485"/>
    </location>
</feature>
<feature type="modified residue" description="Phosphoserine" evidence="8">
    <location>
        <position position="85"/>
    </location>
</feature>
<feature type="modified residue" description="Phosphothreonine" evidence="8">
    <location>
        <position position="263"/>
    </location>
</feature>
<feature type="modified residue" description="Phosphoserine" evidence="8 9">
    <location>
        <position position="481"/>
    </location>
</feature>
<feature type="modified residue" description="Phosphoserine" evidence="9">
    <location>
        <position position="491"/>
    </location>
</feature>
<feature type="modified residue" description="Phosphotyrosine" evidence="9">
    <location>
        <position position="493"/>
    </location>
</feature>
<dbReference type="EMBL" id="X70529">
    <property type="protein sequence ID" value="CAA49919.1"/>
    <property type="molecule type" value="Genomic_DNA"/>
</dbReference>
<dbReference type="EMBL" id="Z36124">
    <property type="protein sequence ID" value="CAA85218.1"/>
    <property type="molecule type" value="Genomic_DNA"/>
</dbReference>
<dbReference type="EMBL" id="BK006936">
    <property type="protein sequence ID" value="DAA07371.1"/>
    <property type="molecule type" value="Genomic_DNA"/>
</dbReference>
<dbReference type="PIR" id="S32958">
    <property type="entry name" value="S32958"/>
</dbReference>
<dbReference type="RefSeq" id="NP_009814.3">
    <property type="nucleotide sequence ID" value="NM_001178603.3"/>
</dbReference>
<dbReference type="SMR" id="P38335"/>
<dbReference type="BioGRID" id="32950">
    <property type="interactions" value="230"/>
</dbReference>
<dbReference type="DIP" id="DIP-5655N"/>
<dbReference type="FunCoup" id="P38335">
    <property type="interactions" value="41"/>
</dbReference>
<dbReference type="IntAct" id="P38335">
    <property type="interactions" value="6"/>
</dbReference>
<dbReference type="MINT" id="P38335"/>
<dbReference type="STRING" id="4932.YBR255W"/>
<dbReference type="iPTMnet" id="P38335"/>
<dbReference type="PaxDb" id="4932-YBR255W"/>
<dbReference type="PeptideAtlas" id="P38335"/>
<dbReference type="EnsemblFungi" id="YBR255W_mRNA">
    <property type="protein sequence ID" value="YBR255W"/>
    <property type="gene ID" value="YBR255W"/>
</dbReference>
<dbReference type="GeneID" id="852557"/>
<dbReference type="KEGG" id="sce:YBR255W"/>
<dbReference type="AGR" id="SGD:S000000459"/>
<dbReference type="SGD" id="S000000459">
    <property type="gene designation" value="MTC4"/>
</dbReference>
<dbReference type="VEuPathDB" id="FungiDB:YBR255W"/>
<dbReference type="eggNOG" id="ENOG502QXZI">
    <property type="taxonomic scope" value="Eukaryota"/>
</dbReference>
<dbReference type="HOGENOM" id="CLU_025639_0_0_1"/>
<dbReference type="InParanoid" id="P38335"/>
<dbReference type="OMA" id="RTSHWDE"/>
<dbReference type="OrthoDB" id="4064064at2759"/>
<dbReference type="BioCyc" id="YEAST:G3O-29180-MONOMER"/>
<dbReference type="BioGRID-ORCS" id="852557">
    <property type="hits" value="1 hit in 10 CRISPR screens"/>
</dbReference>
<dbReference type="PRO" id="PR:P38335"/>
<dbReference type="Proteomes" id="UP000002311">
    <property type="component" value="Chromosome II"/>
</dbReference>
<dbReference type="RNAct" id="P38335">
    <property type="molecule type" value="protein"/>
</dbReference>
<dbReference type="GO" id="GO:0005737">
    <property type="term" value="C:cytoplasm"/>
    <property type="evidence" value="ECO:0007005"/>
    <property type="project" value="SGD"/>
</dbReference>
<dbReference type="GO" id="GO:0005811">
    <property type="term" value="C:lipid droplet"/>
    <property type="evidence" value="ECO:0000314"/>
    <property type="project" value="SGD"/>
</dbReference>
<dbReference type="GO" id="GO:0016020">
    <property type="term" value="C:membrane"/>
    <property type="evidence" value="ECO:0007669"/>
    <property type="project" value="UniProtKB-SubCell"/>
</dbReference>
<dbReference type="GO" id="GO:0005777">
    <property type="term" value="C:peroxisome"/>
    <property type="evidence" value="ECO:0000314"/>
    <property type="project" value="SGD"/>
</dbReference>
<dbReference type="InterPro" id="IPR038769">
    <property type="entry name" value="MTC4"/>
</dbReference>
<dbReference type="PANTHER" id="PTHR38426">
    <property type="entry name" value="MAINTENANCE OF TELOMERE CAPPING PROTEIN 4"/>
    <property type="match status" value="1"/>
</dbReference>
<dbReference type="PANTHER" id="PTHR38426:SF1">
    <property type="entry name" value="MAINTENANCE OF TELOMERE CAPPING PROTEIN 4"/>
    <property type="match status" value="1"/>
</dbReference>
<proteinExistence type="evidence at protein level"/>
<comment type="subcellular location">
    <subcellularLocation>
        <location evidence="7">Membrane</location>
        <topology evidence="7">Single-pass membrane protein</topology>
    </subcellularLocation>
    <subcellularLocation>
        <location evidence="4">Cytoplasm</location>
    </subcellularLocation>
    <text>Punctate pattern.</text>
</comment>
<comment type="disruption phenotype">
    <text evidence="3 6">Shows a slower growth rate on YPD and minimal medium at 15 degrees Celsius. Synthetically sick with temperature-sensitive CDC13-1 mutant.</text>
</comment>
<comment type="miscellaneous">
    <text evidence="5">Present with 396 molecules/cell in log phase SD medium.</text>
</comment>
<accession>P38335</accession>
<accession>D6VQQ1</accession>
<protein>
    <recommendedName>
        <fullName>Maintenance of telomere capping protein 4</fullName>
    </recommendedName>
</protein>
<reference key="1">
    <citation type="journal article" date="1993" name="Yeast">
        <title>The complete sequence of a 19,482 bp segment located on the right arm of chromosome II from Saccharomyces cerevisiae.</title>
        <authorList>
            <person name="Doignon F."/>
            <person name="Biteau N."/>
            <person name="Crouzet M."/>
            <person name="Aigle M."/>
        </authorList>
    </citation>
    <scope>NUCLEOTIDE SEQUENCE [GENOMIC DNA]</scope>
    <source>
        <strain>ATCC 204508 / S288c</strain>
    </source>
</reference>
<reference key="2">
    <citation type="journal article" date="1994" name="EMBO J.">
        <title>Complete DNA sequence of yeast chromosome II.</title>
        <authorList>
            <person name="Feldmann H."/>
            <person name="Aigle M."/>
            <person name="Aljinovic G."/>
            <person name="Andre B."/>
            <person name="Baclet M.C."/>
            <person name="Barthe C."/>
            <person name="Baur A."/>
            <person name="Becam A.-M."/>
            <person name="Biteau N."/>
            <person name="Boles E."/>
            <person name="Brandt T."/>
            <person name="Brendel M."/>
            <person name="Brueckner M."/>
            <person name="Bussereau F."/>
            <person name="Christiansen C."/>
            <person name="Contreras R."/>
            <person name="Crouzet M."/>
            <person name="Cziepluch C."/>
            <person name="Demolis N."/>
            <person name="Delaveau T."/>
            <person name="Doignon F."/>
            <person name="Domdey H."/>
            <person name="Duesterhus S."/>
            <person name="Dubois E."/>
            <person name="Dujon B."/>
            <person name="El Bakkoury M."/>
            <person name="Entian K.-D."/>
            <person name="Feuermann M."/>
            <person name="Fiers W."/>
            <person name="Fobo G.M."/>
            <person name="Fritz C."/>
            <person name="Gassenhuber J."/>
            <person name="Glansdorff N."/>
            <person name="Goffeau A."/>
            <person name="Grivell L.A."/>
            <person name="de Haan M."/>
            <person name="Hein C."/>
            <person name="Herbert C.J."/>
            <person name="Hollenberg C.P."/>
            <person name="Holmstroem K."/>
            <person name="Jacq C."/>
            <person name="Jacquet M."/>
            <person name="Jauniaux J.-C."/>
            <person name="Jonniaux J.-L."/>
            <person name="Kallesoee T."/>
            <person name="Kiesau P."/>
            <person name="Kirchrath L."/>
            <person name="Koetter P."/>
            <person name="Korol S."/>
            <person name="Liebl S."/>
            <person name="Logghe M."/>
            <person name="Lohan A.J.E."/>
            <person name="Louis E.J."/>
            <person name="Li Z.Y."/>
            <person name="Maat M.J."/>
            <person name="Mallet L."/>
            <person name="Mannhaupt G."/>
            <person name="Messenguy F."/>
            <person name="Miosga T."/>
            <person name="Molemans F."/>
            <person name="Mueller S."/>
            <person name="Nasr F."/>
            <person name="Obermaier B."/>
            <person name="Perea J."/>
            <person name="Pierard A."/>
            <person name="Piravandi E."/>
            <person name="Pohl F.M."/>
            <person name="Pohl T.M."/>
            <person name="Potier S."/>
            <person name="Proft M."/>
            <person name="Purnelle B."/>
            <person name="Ramezani Rad M."/>
            <person name="Rieger M."/>
            <person name="Rose M."/>
            <person name="Schaaff-Gerstenschlaeger I."/>
            <person name="Scherens B."/>
            <person name="Schwarzlose C."/>
            <person name="Skala J."/>
            <person name="Slonimski P.P."/>
            <person name="Smits P.H.M."/>
            <person name="Souciet J.-L."/>
            <person name="Steensma H.Y."/>
            <person name="Stucka R."/>
            <person name="Urrestarazu L.A."/>
            <person name="van der Aart Q.J.M."/>
            <person name="Van Dyck L."/>
            <person name="Vassarotti A."/>
            <person name="Vetter I."/>
            <person name="Vierendeels F."/>
            <person name="Vissers S."/>
            <person name="Wagner G."/>
            <person name="de Wergifosse P."/>
            <person name="Wolfe K.H."/>
            <person name="Zagulski M."/>
            <person name="Zimmermann F.K."/>
            <person name="Mewes H.-W."/>
            <person name="Kleine K."/>
        </authorList>
    </citation>
    <scope>NUCLEOTIDE SEQUENCE [LARGE SCALE GENOMIC DNA]</scope>
    <source>
        <strain>ATCC 204508 / S288c</strain>
    </source>
</reference>
<reference key="3">
    <citation type="journal article" date="2014" name="G3 (Bethesda)">
        <title>The reference genome sequence of Saccharomyces cerevisiae: Then and now.</title>
        <authorList>
            <person name="Engel S.R."/>
            <person name="Dietrich F.S."/>
            <person name="Fisk D.G."/>
            <person name="Binkley G."/>
            <person name="Balakrishnan R."/>
            <person name="Costanzo M.C."/>
            <person name="Dwight S.S."/>
            <person name="Hitz B.C."/>
            <person name="Karra K."/>
            <person name="Nash R.S."/>
            <person name="Weng S."/>
            <person name="Wong E.D."/>
            <person name="Lloyd P."/>
            <person name="Skrzypek M.S."/>
            <person name="Miyasato S.R."/>
            <person name="Simison M."/>
            <person name="Cherry J.M."/>
        </authorList>
    </citation>
    <scope>GENOME REANNOTATION</scope>
    <source>
        <strain>ATCC 204508 / S288c</strain>
    </source>
</reference>
<reference key="4">
    <citation type="journal article" date="1999" name="Yeast">
        <title>Basic phenotypic analysis of six novel yeast genes reveals two essential genes and one which affects the growth rate.</title>
        <authorList>
            <person name="Sanjuan R."/>
            <person name="Leon M."/>
            <person name="Zueco J."/>
            <person name="Sentandreu R."/>
        </authorList>
    </citation>
    <scope>DISRUPTION PHENOTYPE</scope>
</reference>
<reference key="5">
    <citation type="journal article" date="2003" name="Nature">
        <title>Global analysis of protein localization in budding yeast.</title>
        <authorList>
            <person name="Huh W.-K."/>
            <person name="Falvo J.V."/>
            <person name="Gerke L.C."/>
            <person name="Carroll A.S."/>
            <person name="Howson R.W."/>
            <person name="Weissman J.S."/>
            <person name="O'Shea E.K."/>
        </authorList>
    </citation>
    <scope>SUBCELLULAR LOCATION [LARGE SCALE ANALYSIS]</scope>
</reference>
<reference key="6">
    <citation type="journal article" date="2003" name="Nature">
        <title>Global analysis of protein expression in yeast.</title>
        <authorList>
            <person name="Ghaemmaghami S."/>
            <person name="Huh W.-K."/>
            <person name="Bower K."/>
            <person name="Howson R.W."/>
            <person name="Belle A."/>
            <person name="Dephoure N."/>
            <person name="O'Shea E.K."/>
            <person name="Weissman J.S."/>
        </authorList>
    </citation>
    <scope>LEVEL OF PROTEIN EXPRESSION [LARGE SCALE ANALYSIS]</scope>
</reference>
<reference key="7">
    <citation type="journal article" date="2008" name="Genetics">
        <title>A genomewide suppressor and enhancer analysis of cdc13-1 reveals varied cellular processes influencing telomere capping in Saccharomyces cerevisiae.</title>
        <authorList>
            <person name="Addinall S.G."/>
            <person name="Downey M."/>
            <person name="Yu M."/>
            <person name="Zubko M.K."/>
            <person name="Dewar J."/>
            <person name="Leake A."/>
            <person name="Hallinan J."/>
            <person name="Shaw O."/>
            <person name="James K."/>
            <person name="Wilkinson D.J."/>
            <person name="Wipat A."/>
            <person name="Durocher D."/>
            <person name="Lydall D."/>
        </authorList>
    </citation>
    <scope>GENE NAME</scope>
    <scope>DISRUPTION PHENOTYPE</scope>
</reference>
<reference key="8">
    <citation type="journal article" date="2008" name="Mol. Cell. Proteomics">
        <title>A multidimensional chromatography technology for in-depth phosphoproteome analysis.</title>
        <authorList>
            <person name="Albuquerque C.P."/>
            <person name="Smolka M.B."/>
            <person name="Payne S.H."/>
            <person name="Bafna V."/>
            <person name="Eng J."/>
            <person name="Zhou H."/>
        </authorList>
    </citation>
    <scope>PHOSPHORYLATION [LARGE SCALE ANALYSIS] AT SER-85; THR-263 AND SER-481</scope>
    <scope>IDENTIFICATION BY MASS SPECTROMETRY [LARGE SCALE ANALYSIS]</scope>
</reference>
<reference key="9">
    <citation type="journal article" date="2009" name="Science">
        <title>Global analysis of Cdk1 substrate phosphorylation sites provides insights into evolution.</title>
        <authorList>
            <person name="Holt L.J."/>
            <person name="Tuch B.B."/>
            <person name="Villen J."/>
            <person name="Johnson A.D."/>
            <person name="Gygi S.P."/>
            <person name="Morgan D.O."/>
        </authorList>
    </citation>
    <scope>PHOSPHORYLATION [LARGE SCALE ANALYSIS] AT SER-481; SER-491 AND TYR-493</scope>
    <scope>IDENTIFICATION BY MASS SPECTROMETRY [LARGE SCALE ANALYSIS]</scope>
</reference>
<keyword id="KW-0963">Cytoplasm</keyword>
<keyword id="KW-0472">Membrane</keyword>
<keyword id="KW-0597">Phosphoprotein</keyword>
<keyword id="KW-1185">Reference proteome</keyword>
<keyword id="KW-0812">Transmembrane</keyword>
<keyword id="KW-1133">Transmembrane helix</keyword>
<evidence type="ECO:0000255" key="1"/>
<evidence type="ECO:0000256" key="2">
    <source>
        <dbReference type="SAM" id="MobiDB-lite"/>
    </source>
</evidence>
<evidence type="ECO:0000269" key="3">
    <source>
    </source>
</evidence>
<evidence type="ECO:0000269" key="4">
    <source>
    </source>
</evidence>
<evidence type="ECO:0000269" key="5">
    <source>
    </source>
</evidence>
<evidence type="ECO:0000269" key="6">
    <source>
    </source>
</evidence>
<evidence type="ECO:0000305" key="7"/>
<evidence type="ECO:0007744" key="8">
    <source>
    </source>
</evidence>
<evidence type="ECO:0007744" key="9">
    <source>
    </source>
</evidence>